<comment type="function">
    <text evidence="4">Involved in the biosynthesis of sterol glucoside. Can use different sterols such as cholesterol, sitosterol, and ergosterol as sugar acceptors.</text>
</comment>
<comment type="catalytic activity">
    <reaction>
        <text>a sterol + UDP-alpha-D-glucose = a sterol 3-beta-D-glucoside + UDP + H(+)</text>
        <dbReference type="Rhea" id="RHEA:22724"/>
        <dbReference type="ChEBI" id="CHEBI:15378"/>
        <dbReference type="ChEBI" id="CHEBI:15889"/>
        <dbReference type="ChEBI" id="CHEBI:37424"/>
        <dbReference type="ChEBI" id="CHEBI:58223"/>
        <dbReference type="ChEBI" id="CHEBI:58885"/>
        <dbReference type="EC" id="2.4.1.173"/>
    </reaction>
</comment>
<comment type="similarity">
    <text evidence="5">Belongs to the glycosyltransferase 28 family.</text>
</comment>
<comment type="sequence caution" evidence="5">
    <conflict type="erroneous initiation">
        <sequence resource="EMBL-CDS" id="AAD28546"/>
    </conflict>
</comment>
<dbReference type="EC" id="2.4.1.173"/>
<dbReference type="EMBL" id="AAFI02000119">
    <property type="protein sequence ID" value="EAL63104.1"/>
    <property type="molecule type" value="Genomic_DNA"/>
</dbReference>
<dbReference type="EMBL" id="AF098916">
    <property type="protein sequence ID" value="AAD28546.1"/>
    <property type="status" value="ALT_INIT"/>
    <property type="molecule type" value="mRNA"/>
</dbReference>
<dbReference type="RefSeq" id="XP_636616.1">
    <property type="nucleotide sequence ID" value="XM_631524.1"/>
</dbReference>
<dbReference type="SMR" id="Q54IL5"/>
<dbReference type="STRING" id="44689.Q54IL5"/>
<dbReference type="CAZy" id="GT1">
    <property type="family name" value="Glycosyltransferase Family 1"/>
</dbReference>
<dbReference type="GlyGen" id="Q54IL5">
    <property type="glycosylation" value="2 sites"/>
</dbReference>
<dbReference type="PaxDb" id="44689-DDB0191537"/>
<dbReference type="EnsemblProtists" id="EAL63104">
    <property type="protein sequence ID" value="EAL63104"/>
    <property type="gene ID" value="DDB_G0288655"/>
</dbReference>
<dbReference type="GeneID" id="8626744"/>
<dbReference type="KEGG" id="ddi:DDB_G0288655"/>
<dbReference type="dictyBase" id="DDB_G0288655">
    <property type="gene designation" value="ugt52"/>
</dbReference>
<dbReference type="VEuPathDB" id="AmoebaDB:DDB_G0288655"/>
<dbReference type="eggNOG" id="KOG1032">
    <property type="taxonomic scope" value="Eukaryota"/>
</dbReference>
<dbReference type="eggNOG" id="KOG1192">
    <property type="taxonomic scope" value="Eukaryota"/>
</dbReference>
<dbReference type="eggNOG" id="KOG1819">
    <property type="taxonomic scope" value="Eukaryota"/>
</dbReference>
<dbReference type="HOGENOM" id="CLU_240996_0_0_1"/>
<dbReference type="InParanoid" id="Q54IL5"/>
<dbReference type="OMA" id="CFAGPHI"/>
<dbReference type="BRENDA" id="2.4.1.173">
    <property type="organism ID" value="1939"/>
</dbReference>
<dbReference type="PRO" id="PR:Q54IL5"/>
<dbReference type="Proteomes" id="UP000002195">
    <property type="component" value="Chromosome 5"/>
</dbReference>
<dbReference type="GO" id="GO:0016906">
    <property type="term" value="F:sterol 3-beta-glucosyltransferase activity"/>
    <property type="evidence" value="ECO:0000314"/>
    <property type="project" value="dictyBase"/>
</dbReference>
<dbReference type="GO" id="GO:0008270">
    <property type="term" value="F:zinc ion binding"/>
    <property type="evidence" value="ECO:0007669"/>
    <property type="project" value="UniProtKB-KW"/>
</dbReference>
<dbReference type="GO" id="GO:0005975">
    <property type="term" value="P:carbohydrate metabolic process"/>
    <property type="evidence" value="ECO:0007669"/>
    <property type="project" value="InterPro"/>
</dbReference>
<dbReference type="GO" id="GO:0030259">
    <property type="term" value="P:lipid glycosylation"/>
    <property type="evidence" value="ECO:0007669"/>
    <property type="project" value="InterPro"/>
</dbReference>
<dbReference type="GO" id="GO:0016126">
    <property type="term" value="P:sterol biosynthetic process"/>
    <property type="evidence" value="ECO:0007669"/>
    <property type="project" value="UniProtKB-KW"/>
</dbReference>
<dbReference type="GO" id="GO:0016125">
    <property type="term" value="P:sterol metabolic process"/>
    <property type="evidence" value="ECO:0000314"/>
    <property type="project" value="dictyBase"/>
</dbReference>
<dbReference type="CDD" id="cd00065">
    <property type="entry name" value="FYVE_like_SF"/>
    <property type="match status" value="1"/>
</dbReference>
<dbReference type="CDD" id="cd03784">
    <property type="entry name" value="GT1_Gtf-like"/>
    <property type="match status" value="1"/>
</dbReference>
<dbReference type="FunFam" id="3.40.50.2000:FF:000029">
    <property type="entry name" value="Sterol 3-beta-glucosyltransferase"/>
    <property type="match status" value="1"/>
</dbReference>
<dbReference type="FunFam" id="3.40.50.2000:FF:000009">
    <property type="entry name" value="Sterol 3-beta-glucosyltransferase UGT80A2"/>
    <property type="match status" value="1"/>
</dbReference>
<dbReference type="FunFam" id="2.30.29.30:FF:000940">
    <property type="entry name" value="UDP-sugar-dependent glycosyltransferase 52"/>
    <property type="match status" value="1"/>
</dbReference>
<dbReference type="Gene3D" id="3.40.50.2000">
    <property type="entry name" value="Glycogen Phosphorylase B"/>
    <property type="match status" value="2"/>
</dbReference>
<dbReference type="Gene3D" id="2.30.29.30">
    <property type="entry name" value="Pleckstrin-homology domain (PH domain)/Phosphotyrosine-binding domain (PTB)"/>
    <property type="match status" value="4"/>
</dbReference>
<dbReference type="Gene3D" id="3.30.40.10">
    <property type="entry name" value="Zinc/RING finger domain, C3HC4 (zinc finger)"/>
    <property type="match status" value="1"/>
</dbReference>
<dbReference type="InterPro" id="IPR010610">
    <property type="entry name" value="EryCIII-like_C"/>
</dbReference>
<dbReference type="InterPro" id="IPR050426">
    <property type="entry name" value="Glycosyltransferase_28"/>
</dbReference>
<dbReference type="InterPro" id="IPR004276">
    <property type="entry name" value="GlycoTrans_28_N"/>
</dbReference>
<dbReference type="InterPro" id="IPR004182">
    <property type="entry name" value="GRAM"/>
</dbReference>
<dbReference type="InterPro" id="IPR011993">
    <property type="entry name" value="PH-like_dom_sf"/>
</dbReference>
<dbReference type="InterPro" id="IPR001849">
    <property type="entry name" value="PH_domain"/>
</dbReference>
<dbReference type="InterPro" id="IPR002213">
    <property type="entry name" value="UDP_glucos_trans"/>
</dbReference>
<dbReference type="InterPro" id="IPR000306">
    <property type="entry name" value="Znf_FYVE"/>
</dbReference>
<dbReference type="InterPro" id="IPR017455">
    <property type="entry name" value="Znf_FYVE-rel"/>
</dbReference>
<dbReference type="InterPro" id="IPR011011">
    <property type="entry name" value="Znf_FYVE_PHD"/>
</dbReference>
<dbReference type="InterPro" id="IPR013083">
    <property type="entry name" value="Znf_RING/FYVE/PHD"/>
</dbReference>
<dbReference type="PANTHER" id="PTHR48050">
    <property type="entry name" value="STEROL 3-BETA-GLUCOSYLTRANSFERASE"/>
    <property type="match status" value="1"/>
</dbReference>
<dbReference type="PANTHER" id="PTHR48050:SF25">
    <property type="entry name" value="STEROL 3-BETA-GLUCOSYLTRANSFERASE"/>
    <property type="match status" value="1"/>
</dbReference>
<dbReference type="Pfam" id="PF06722">
    <property type="entry name" value="EryCIII-like_C"/>
    <property type="match status" value="1"/>
</dbReference>
<dbReference type="Pfam" id="PF01363">
    <property type="entry name" value="FYVE"/>
    <property type="match status" value="1"/>
</dbReference>
<dbReference type="Pfam" id="PF03033">
    <property type="entry name" value="Glyco_transf_28"/>
    <property type="match status" value="1"/>
</dbReference>
<dbReference type="Pfam" id="PF02893">
    <property type="entry name" value="GRAM"/>
    <property type="match status" value="1"/>
</dbReference>
<dbReference type="Pfam" id="PF00169">
    <property type="entry name" value="PH"/>
    <property type="match status" value="1"/>
</dbReference>
<dbReference type="SMART" id="SM00064">
    <property type="entry name" value="FYVE"/>
    <property type="match status" value="1"/>
</dbReference>
<dbReference type="SMART" id="SM00568">
    <property type="entry name" value="GRAM"/>
    <property type="match status" value="2"/>
</dbReference>
<dbReference type="SMART" id="SM00233">
    <property type="entry name" value="PH"/>
    <property type="match status" value="1"/>
</dbReference>
<dbReference type="SUPFAM" id="SSF57903">
    <property type="entry name" value="FYVE/PHD zinc finger"/>
    <property type="match status" value="1"/>
</dbReference>
<dbReference type="SUPFAM" id="SSF50729">
    <property type="entry name" value="PH domain-like"/>
    <property type="match status" value="1"/>
</dbReference>
<dbReference type="SUPFAM" id="SSF53756">
    <property type="entry name" value="UDP-Glycosyltransferase/glycogen phosphorylase"/>
    <property type="match status" value="1"/>
</dbReference>
<dbReference type="PROSITE" id="PS50003">
    <property type="entry name" value="PH_DOMAIN"/>
    <property type="match status" value="1"/>
</dbReference>
<dbReference type="PROSITE" id="PS50178">
    <property type="entry name" value="ZF_FYVE"/>
    <property type="match status" value="1"/>
</dbReference>
<reference key="1">
    <citation type="journal article" date="2005" name="Nature">
        <title>The genome of the social amoeba Dictyostelium discoideum.</title>
        <authorList>
            <person name="Eichinger L."/>
            <person name="Pachebat J.A."/>
            <person name="Gloeckner G."/>
            <person name="Rajandream M.A."/>
            <person name="Sucgang R."/>
            <person name="Berriman M."/>
            <person name="Song J."/>
            <person name="Olsen R."/>
            <person name="Szafranski K."/>
            <person name="Xu Q."/>
            <person name="Tunggal B."/>
            <person name="Kummerfeld S."/>
            <person name="Madera M."/>
            <person name="Konfortov B.A."/>
            <person name="Rivero F."/>
            <person name="Bankier A.T."/>
            <person name="Lehmann R."/>
            <person name="Hamlin N."/>
            <person name="Davies R."/>
            <person name="Gaudet P."/>
            <person name="Fey P."/>
            <person name="Pilcher K."/>
            <person name="Chen G."/>
            <person name="Saunders D."/>
            <person name="Sodergren E.J."/>
            <person name="Davis P."/>
            <person name="Kerhornou A."/>
            <person name="Nie X."/>
            <person name="Hall N."/>
            <person name="Anjard C."/>
            <person name="Hemphill L."/>
            <person name="Bason N."/>
            <person name="Farbrother P."/>
            <person name="Desany B."/>
            <person name="Just E."/>
            <person name="Morio T."/>
            <person name="Rost R."/>
            <person name="Churcher C.M."/>
            <person name="Cooper J."/>
            <person name="Haydock S."/>
            <person name="van Driessche N."/>
            <person name="Cronin A."/>
            <person name="Goodhead I."/>
            <person name="Muzny D.M."/>
            <person name="Mourier T."/>
            <person name="Pain A."/>
            <person name="Lu M."/>
            <person name="Harper D."/>
            <person name="Lindsay R."/>
            <person name="Hauser H."/>
            <person name="James K.D."/>
            <person name="Quiles M."/>
            <person name="Madan Babu M."/>
            <person name="Saito T."/>
            <person name="Buchrieser C."/>
            <person name="Wardroper A."/>
            <person name="Felder M."/>
            <person name="Thangavelu M."/>
            <person name="Johnson D."/>
            <person name="Knights A."/>
            <person name="Loulseged H."/>
            <person name="Mungall K.L."/>
            <person name="Oliver K."/>
            <person name="Price C."/>
            <person name="Quail M.A."/>
            <person name="Urushihara H."/>
            <person name="Hernandez J."/>
            <person name="Rabbinowitsch E."/>
            <person name="Steffen D."/>
            <person name="Sanders M."/>
            <person name="Ma J."/>
            <person name="Kohara Y."/>
            <person name="Sharp S."/>
            <person name="Simmonds M.N."/>
            <person name="Spiegler S."/>
            <person name="Tivey A."/>
            <person name="Sugano S."/>
            <person name="White B."/>
            <person name="Walker D."/>
            <person name="Woodward J.R."/>
            <person name="Winckler T."/>
            <person name="Tanaka Y."/>
            <person name="Shaulsky G."/>
            <person name="Schleicher M."/>
            <person name="Weinstock G.M."/>
            <person name="Rosenthal A."/>
            <person name="Cox E.C."/>
            <person name="Chisholm R.L."/>
            <person name="Gibbs R.A."/>
            <person name="Loomis W.F."/>
            <person name="Platzer M."/>
            <person name="Kay R.R."/>
            <person name="Williams J.G."/>
            <person name="Dear P.H."/>
            <person name="Noegel A.A."/>
            <person name="Barrell B.G."/>
            <person name="Kuspa A."/>
        </authorList>
    </citation>
    <scope>NUCLEOTIDE SEQUENCE [LARGE SCALE GENOMIC DNA]</scope>
    <source>
        <strain>AX4</strain>
    </source>
</reference>
<reference key="2">
    <citation type="journal article" date="1999" name="J. Biol. Chem.">
        <title>Cloning and functional expression of UGT genes encoding sterol glucosyltransferases from Saccharomyces cerevisiae, Candida albicans, Pichia pastoris, and Dictyostelium discoideum.</title>
        <authorList>
            <person name="Warnecke D.C."/>
            <person name="Erdmann R."/>
            <person name="Fahl A."/>
            <person name="Hube B."/>
            <person name="Mueller F."/>
            <person name="Zank T."/>
            <person name="Zaehringer U."/>
            <person name="Heinz E."/>
        </authorList>
    </citation>
    <scope>NUCLEOTIDE SEQUENCE [MRNA] OF 594-1697</scope>
    <scope>FUNCTION</scope>
</reference>
<evidence type="ECO:0000255" key="1">
    <source>
        <dbReference type="PROSITE-ProRule" id="PRU00091"/>
    </source>
</evidence>
<evidence type="ECO:0000255" key="2">
    <source>
        <dbReference type="PROSITE-ProRule" id="PRU00145"/>
    </source>
</evidence>
<evidence type="ECO:0000256" key="3">
    <source>
        <dbReference type="SAM" id="MobiDB-lite"/>
    </source>
</evidence>
<evidence type="ECO:0000269" key="4">
    <source>
    </source>
</evidence>
<evidence type="ECO:0000305" key="5"/>
<organism>
    <name type="scientific">Dictyostelium discoideum</name>
    <name type="common">Social amoeba</name>
    <dbReference type="NCBI Taxonomy" id="44689"/>
    <lineage>
        <taxon>Eukaryota</taxon>
        <taxon>Amoebozoa</taxon>
        <taxon>Evosea</taxon>
        <taxon>Eumycetozoa</taxon>
        <taxon>Dictyostelia</taxon>
        <taxon>Dictyosteliales</taxon>
        <taxon>Dictyosteliaceae</taxon>
        <taxon>Dictyostelium</taxon>
    </lineage>
</organism>
<name>UGT52_DICDI</name>
<protein>
    <recommendedName>
        <fullName>UDP-sugar-dependent glycosyltransferase 52</fullName>
        <ecNumber>2.4.1.173</ecNumber>
    </recommendedName>
    <alternativeName>
        <fullName>Sterol 3-beta-glucosyltransferase</fullName>
    </alternativeName>
    <alternativeName>
        <fullName>UDP-glycosyltransferase 52</fullName>
    </alternativeName>
</protein>
<proteinExistence type="evidence at transcript level"/>
<keyword id="KW-0328">Glycosyltransferase</keyword>
<keyword id="KW-0444">Lipid biosynthesis</keyword>
<keyword id="KW-0443">Lipid metabolism</keyword>
<keyword id="KW-0479">Metal-binding</keyword>
<keyword id="KW-1185">Reference proteome</keyword>
<keyword id="KW-0677">Repeat</keyword>
<keyword id="KW-0752">Steroid biosynthesis</keyword>
<keyword id="KW-0753">Steroid metabolism</keyword>
<keyword id="KW-0756">Sterol biosynthesis</keyword>
<keyword id="KW-1207">Sterol metabolism</keyword>
<keyword id="KW-0808">Transferase</keyword>
<keyword id="KW-0862">Zinc</keyword>
<keyword id="KW-0863">Zinc-finger</keyword>
<feature type="chain" id="PRO_0000367478" description="UDP-sugar-dependent glycosyltransferase 52">
    <location>
        <begin position="1"/>
        <end position="1697"/>
    </location>
</feature>
<feature type="domain" description="PH" evidence="2">
    <location>
        <begin position="234"/>
        <end position="332"/>
    </location>
</feature>
<feature type="domain" description="GRAM 1">
    <location>
        <begin position="658"/>
        <end position="793"/>
    </location>
</feature>
<feature type="domain" description="GRAM 2">
    <location>
        <begin position="881"/>
        <end position="948"/>
    </location>
</feature>
<feature type="zinc finger region" description="FYVE-type" evidence="1">
    <location>
        <begin position="1622"/>
        <end position="1685"/>
    </location>
</feature>
<feature type="region of interest" description="Disordered" evidence="3">
    <location>
        <begin position="20"/>
        <end position="40"/>
    </location>
</feature>
<feature type="region of interest" description="Disordered" evidence="3">
    <location>
        <begin position="142"/>
        <end position="166"/>
    </location>
</feature>
<feature type="region of interest" description="Disordered" evidence="3">
    <location>
        <begin position="573"/>
        <end position="645"/>
    </location>
</feature>
<feature type="region of interest" description="Disordered" evidence="3">
    <location>
        <begin position="707"/>
        <end position="756"/>
    </location>
</feature>
<feature type="region of interest" description="Disordered" evidence="3">
    <location>
        <begin position="1011"/>
        <end position="1047"/>
    </location>
</feature>
<feature type="region of interest" description="Disordered" evidence="3">
    <location>
        <begin position="1062"/>
        <end position="1085"/>
    </location>
</feature>
<feature type="region of interest" description="Disordered" evidence="3">
    <location>
        <begin position="1110"/>
        <end position="1130"/>
    </location>
</feature>
<feature type="region of interest" description="Disordered" evidence="3">
    <location>
        <begin position="1466"/>
        <end position="1488"/>
    </location>
</feature>
<feature type="compositionally biased region" description="Low complexity" evidence="3">
    <location>
        <begin position="584"/>
        <end position="628"/>
    </location>
</feature>
<feature type="compositionally biased region" description="Low complexity" evidence="3">
    <location>
        <begin position="711"/>
        <end position="722"/>
    </location>
</feature>
<feature type="compositionally biased region" description="Acidic residues" evidence="3">
    <location>
        <begin position="739"/>
        <end position="749"/>
    </location>
</feature>
<feature type="compositionally biased region" description="Low complexity" evidence="3">
    <location>
        <begin position="1026"/>
        <end position="1047"/>
    </location>
</feature>
<feature type="compositionally biased region" description="Low complexity" evidence="3">
    <location>
        <begin position="1065"/>
        <end position="1084"/>
    </location>
</feature>
<feature type="compositionally biased region" description="Low complexity" evidence="3">
    <location>
        <begin position="1112"/>
        <end position="1130"/>
    </location>
</feature>
<feature type="compositionally biased region" description="Low complexity" evidence="3">
    <location>
        <begin position="1469"/>
        <end position="1479"/>
    </location>
</feature>
<feature type="binding site" evidence="1">
    <location>
        <position position="1628"/>
    </location>
    <ligand>
        <name>Zn(2+)</name>
        <dbReference type="ChEBI" id="CHEBI:29105"/>
        <label>1</label>
    </ligand>
</feature>
<feature type="binding site" evidence="1">
    <location>
        <position position="1631"/>
    </location>
    <ligand>
        <name>Zn(2+)</name>
        <dbReference type="ChEBI" id="CHEBI:29105"/>
        <label>1</label>
    </ligand>
</feature>
<feature type="binding site" evidence="1">
    <location>
        <position position="1647"/>
    </location>
    <ligand>
        <name>Zn(2+)</name>
        <dbReference type="ChEBI" id="CHEBI:29105"/>
        <label>2</label>
    </ligand>
</feature>
<feature type="binding site" evidence="1">
    <location>
        <position position="1650"/>
    </location>
    <ligand>
        <name>Zn(2+)</name>
        <dbReference type="ChEBI" id="CHEBI:29105"/>
        <label>2</label>
    </ligand>
</feature>
<feature type="binding site" evidence="1">
    <location>
        <position position="1655"/>
    </location>
    <ligand>
        <name>Zn(2+)</name>
        <dbReference type="ChEBI" id="CHEBI:29105"/>
        <label>1</label>
    </ligand>
</feature>
<feature type="binding site" evidence="1">
    <location>
        <position position="1658"/>
    </location>
    <ligand>
        <name>Zn(2+)</name>
        <dbReference type="ChEBI" id="CHEBI:29105"/>
        <label>1</label>
    </ligand>
</feature>
<feature type="binding site" evidence="1">
    <location>
        <position position="1677"/>
    </location>
    <ligand>
        <name>Zn(2+)</name>
        <dbReference type="ChEBI" id="CHEBI:29105"/>
        <label>2</label>
    </ligand>
</feature>
<feature type="binding site" evidence="1">
    <location>
        <position position="1680"/>
    </location>
    <ligand>
        <name>Zn(2+)</name>
        <dbReference type="ChEBI" id="CHEBI:29105"/>
        <label>2</label>
    </ligand>
</feature>
<sequence length="1697" mass="190915">MDEFTSDSLTTSRLLRQISHSDSLSSVGSSSNRSNSNYENKINNGIINDFDSTNANDGISNNSNNSNNNNNSSSILKIHQSPQSILSTEQQHQIQQYQQYHQQQIYESGYVPPHVYIFDPDYKSNNDEEDKEKRSLIELNKSTDLSNIKTTTTTTTTTTPPPLMIPENEEENKQLRQEILNELSKSESFTKIKEPGEIYGFCECSLLYNHLTCANLVITSNYLIFLPQQQVDSDYVLENYLYKKGDFFWKKYWFVLTPDSISWYKSSILKETHYPNGTILLSKIVTVDKLDPEETGKPFCLQIMTNTSIHLIQLDTEPQLEHWYHEINRMQKNLNVTIPIGDIVSITMESNAALFFDSLCLTLKKGENCLVTPSSSSNEVYSLLIKLWNRNRGVTVVEPEKQQRLLEFQKTFKLSQGVNLLIETPCVFYQDEEFSYEGVLYATTEGTLYFSSLDSVLIIPESDIYAITIDRKSDNRDALKVYTTDYDVLFFDSIDDIETFFNVISTSLARSNPKIFFSTVGQIPPIDEPKHDEKEHKSTYQTISSGIRSWKIPIPSLPNFSIPIPKSIPIPLFRSKSSSHLDPQNSQQQQQQQQQSSSLQLDDNNNNIVIPHTSNPTTIIPSTSSSSAIPPPPSSTSSTSSTTHEKTIIIQKNSSINSTFHDIFPLLPLDETVIMFQNCSLYYYSYDSNVEGIVYITKSYIAFNPSPLDKQQQQQQQQQQQQPNSSSITSTTYDRDLDTDSDTDSESDFDYPKQSQHDNSVVMVNNNQYKVKEVLMKKALIPIEDIVSVTKERFLLFFNQCVKIITLDHKWIFGSLNNINSFYNLILETWKQIPKTLLDSSSSSSSSSSSSLLSSSPNNNNSDLNINGNSEGSIFTPLESIKIKNKLGLPADEVLITWFNCTNFKGAQLKYGFLYISNNNICFRSKFGFQKRTIVIPLSQVIEIKKYSAFIPNGIKITTASHHEFQFASFIHRNRVYQILYETWLKANNKKSNSSNSLSSSPTITSPLAISPSIASPSITPPSSTPPSSTTPSSTTPTITSPTIHSTLPSTVVYNDIQEIIDGENNSNNNNNNNNTNNTNKSNSFIGNVEEDVDKIKRSIKSLPILKIHSAQQQQQQQPKTTTTTTSTTTTNLISPRLLTPLTITQSPGFSSLVNSPILPVKPLRITILTIGSRGDIQPFIALSLGLKEYGHNVTLATHELYRDLISKEFGLNYQPLGGDPRELMDLCVRNGIFTPKFIKEALSRFRSFIDDLLLTCWKAVQNSNTQVLIATPGCFAGPHIGEVLQIPFFNAFTMPFTRTRTYPNPFAPFASHQMGGVFNLATHVMMEKVLWQPISGQINQWRTETLKIPPWNSSVSINETYRMPYLYCFSKYLVPKPPDWSGEIAITGYWTLKNQANSDSPPDDLIQFLNEESSTENDDIPIYIGFGSIVIDNPTALSLLLIEAIKLSGKRAIISQGWGGLSIDEHNNNNNNNNNNNNGENSDSNKSSLQSNRIYLLKKPVDHSWLFEKVSLVISHGGAGTVAASLLAAKPTIVVPFFGDQFFWGERIKQTGIGTSIPFDILTAKSLSSHIISILNEPSVRAKVNKMSHLLKREDGVKTAIDFIHRYLPFSFIPPREIPFSSAPNSCMGCKQPFTLLHVMKARVHCHCCGKIFCESCTSHKCPIKKYRINTPVRVCDKCFNDLQSNPSSNSFILND</sequence>
<gene>
    <name type="primary">ugt52</name>
    <name type="ORF">DDB_G0288655</name>
</gene>
<accession>Q54IL5</accession>
<accession>Q9XYD4</accession>